<dbReference type="EMBL" id="CP000628">
    <property type="protein sequence ID" value="ACM26295.1"/>
    <property type="molecule type" value="Genomic_DNA"/>
</dbReference>
<dbReference type="RefSeq" id="WP_007690781.1">
    <property type="nucleotide sequence ID" value="NC_011985.1"/>
</dbReference>
<dbReference type="SMR" id="B9JDU4"/>
<dbReference type="STRING" id="311403.Arad_1994"/>
<dbReference type="GeneID" id="86848183"/>
<dbReference type="KEGG" id="ara:Arad_1994"/>
<dbReference type="eggNOG" id="COG0256">
    <property type="taxonomic scope" value="Bacteria"/>
</dbReference>
<dbReference type="HOGENOM" id="CLU_098841_0_1_5"/>
<dbReference type="Proteomes" id="UP000001600">
    <property type="component" value="Chromosome 1"/>
</dbReference>
<dbReference type="GO" id="GO:0022625">
    <property type="term" value="C:cytosolic large ribosomal subunit"/>
    <property type="evidence" value="ECO:0007669"/>
    <property type="project" value="TreeGrafter"/>
</dbReference>
<dbReference type="GO" id="GO:0008097">
    <property type="term" value="F:5S rRNA binding"/>
    <property type="evidence" value="ECO:0007669"/>
    <property type="project" value="TreeGrafter"/>
</dbReference>
<dbReference type="GO" id="GO:0003735">
    <property type="term" value="F:structural constituent of ribosome"/>
    <property type="evidence" value="ECO:0007669"/>
    <property type="project" value="InterPro"/>
</dbReference>
<dbReference type="GO" id="GO:0006412">
    <property type="term" value="P:translation"/>
    <property type="evidence" value="ECO:0007669"/>
    <property type="project" value="UniProtKB-UniRule"/>
</dbReference>
<dbReference type="CDD" id="cd00432">
    <property type="entry name" value="Ribosomal_L18_L5e"/>
    <property type="match status" value="1"/>
</dbReference>
<dbReference type="FunFam" id="3.30.420.100:FF:000001">
    <property type="entry name" value="50S ribosomal protein L18"/>
    <property type="match status" value="1"/>
</dbReference>
<dbReference type="Gene3D" id="3.30.420.100">
    <property type="match status" value="1"/>
</dbReference>
<dbReference type="HAMAP" id="MF_01337_B">
    <property type="entry name" value="Ribosomal_uL18_B"/>
    <property type="match status" value="1"/>
</dbReference>
<dbReference type="InterPro" id="IPR004389">
    <property type="entry name" value="Ribosomal_uL18_bac-type"/>
</dbReference>
<dbReference type="InterPro" id="IPR005484">
    <property type="entry name" value="Ribosomal_uL18_bac/euk"/>
</dbReference>
<dbReference type="NCBIfam" id="TIGR00060">
    <property type="entry name" value="L18_bact"/>
    <property type="match status" value="1"/>
</dbReference>
<dbReference type="PANTHER" id="PTHR12899">
    <property type="entry name" value="39S RIBOSOMAL PROTEIN L18, MITOCHONDRIAL"/>
    <property type="match status" value="1"/>
</dbReference>
<dbReference type="PANTHER" id="PTHR12899:SF3">
    <property type="entry name" value="LARGE RIBOSOMAL SUBUNIT PROTEIN UL18M"/>
    <property type="match status" value="1"/>
</dbReference>
<dbReference type="Pfam" id="PF00861">
    <property type="entry name" value="Ribosomal_L18p"/>
    <property type="match status" value="1"/>
</dbReference>
<dbReference type="SUPFAM" id="SSF53137">
    <property type="entry name" value="Translational machinery components"/>
    <property type="match status" value="1"/>
</dbReference>
<evidence type="ECO:0000255" key="1">
    <source>
        <dbReference type="HAMAP-Rule" id="MF_01337"/>
    </source>
</evidence>
<evidence type="ECO:0000305" key="2"/>
<comment type="function">
    <text evidence="1">This is one of the proteins that bind and probably mediate the attachment of the 5S RNA into the large ribosomal subunit, where it forms part of the central protuberance.</text>
</comment>
<comment type="subunit">
    <text evidence="1">Part of the 50S ribosomal subunit; part of the 5S rRNA/L5/L18/L25 subcomplex. Contacts the 5S and 23S rRNAs.</text>
</comment>
<comment type="similarity">
    <text evidence="1">Belongs to the universal ribosomal protein uL18 family.</text>
</comment>
<sequence length="120" mass="12804">MASRKEALARRANRVRRQLKSVANGRPRLSVHRSSKNIYVQVIDDAAGKTLASASTLDKDLRGSLKTGADTAAAALVGKLVAERATKAGVKEVVFDRGAFIYHGRIKALAEAAREGGLSF</sequence>
<accession>B9JDU4</accession>
<keyword id="KW-0687">Ribonucleoprotein</keyword>
<keyword id="KW-0689">Ribosomal protein</keyword>
<keyword id="KW-0694">RNA-binding</keyword>
<keyword id="KW-0699">rRNA-binding</keyword>
<proteinExistence type="inferred from homology"/>
<feature type="chain" id="PRO_1000166199" description="Large ribosomal subunit protein uL18">
    <location>
        <begin position="1"/>
        <end position="120"/>
    </location>
</feature>
<protein>
    <recommendedName>
        <fullName evidence="1">Large ribosomal subunit protein uL18</fullName>
    </recommendedName>
    <alternativeName>
        <fullName evidence="2">50S ribosomal protein L18</fullName>
    </alternativeName>
</protein>
<gene>
    <name evidence="1" type="primary">rplR</name>
    <name type="ordered locus">Arad_1994</name>
</gene>
<name>RL18_RHIR8</name>
<reference key="1">
    <citation type="journal article" date="2009" name="J. Bacteriol.">
        <title>Genome sequences of three Agrobacterium biovars help elucidate the evolution of multichromosome genomes in bacteria.</title>
        <authorList>
            <person name="Slater S.C."/>
            <person name="Goldman B.S."/>
            <person name="Goodner B."/>
            <person name="Setubal J.C."/>
            <person name="Farrand S.K."/>
            <person name="Nester E.W."/>
            <person name="Burr T.J."/>
            <person name="Banta L."/>
            <person name="Dickerman A.W."/>
            <person name="Paulsen I."/>
            <person name="Otten L."/>
            <person name="Suen G."/>
            <person name="Welch R."/>
            <person name="Almeida N.F."/>
            <person name="Arnold F."/>
            <person name="Burton O.T."/>
            <person name="Du Z."/>
            <person name="Ewing A."/>
            <person name="Godsy E."/>
            <person name="Heisel S."/>
            <person name="Houmiel K.L."/>
            <person name="Jhaveri J."/>
            <person name="Lu J."/>
            <person name="Miller N.M."/>
            <person name="Norton S."/>
            <person name="Chen Q."/>
            <person name="Phoolcharoen W."/>
            <person name="Ohlin V."/>
            <person name="Ondrusek D."/>
            <person name="Pride N."/>
            <person name="Stricklin S.L."/>
            <person name="Sun J."/>
            <person name="Wheeler C."/>
            <person name="Wilson L."/>
            <person name="Zhu H."/>
            <person name="Wood D.W."/>
        </authorList>
    </citation>
    <scope>NUCLEOTIDE SEQUENCE [LARGE SCALE GENOMIC DNA]</scope>
    <source>
        <strain>K84 / ATCC BAA-868</strain>
    </source>
</reference>
<organism>
    <name type="scientific">Rhizobium rhizogenes (strain K84 / ATCC BAA-868)</name>
    <name type="common">Agrobacterium radiobacter</name>
    <dbReference type="NCBI Taxonomy" id="311403"/>
    <lineage>
        <taxon>Bacteria</taxon>
        <taxon>Pseudomonadati</taxon>
        <taxon>Pseudomonadota</taxon>
        <taxon>Alphaproteobacteria</taxon>
        <taxon>Hyphomicrobiales</taxon>
        <taxon>Rhizobiaceae</taxon>
        <taxon>Rhizobium/Agrobacterium group</taxon>
        <taxon>Rhizobium</taxon>
    </lineage>
</organism>